<gene>
    <name evidence="2" type="primary">trmB</name>
    <name type="ordered locus">TPASS_0464</name>
</gene>
<organism>
    <name type="scientific">Treponema pallidum subsp. pallidum (strain SS14)</name>
    <dbReference type="NCBI Taxonomy" id="455434"/>
    <lineage>
        <taxon>Bacteria</taxon>
        <taxon>Pseudomonadati</taxon>
        <taxon>Spirochaetota</taxon>
        <taxon>Spirochaetia</taxon>
        <taxon>Spirochaetales</taxon>
        <taxon>Treponemataceae</taxon>
        <taxon>Treponema</taxon>
    </lineage>
</organism>
<comment type="function">
    <text evidence="2">Catalyzes the formation of N(7)-methylguanine at position 46 (m7G46) in tRNA.</text>
</comment>
<comment type="catalytic activity">
    <reaction evidence="2">
        <text>guanosine(46) in tRNA + S-adenosyl-L-methionine = N(7)-methylguanosine(46) in tRNA + S-adenosyl-L-homocysteine</text>
        <dbReference type="Rhea" id="RHEA:42708"/>
        <dbReference type="Rhea" id="RHEA-COMP:10188"/>
        <dbReference type="Rhea" id="RHEA-COMP:10189"/>
        <dbReference type="ChEBI" id="CHEBI:57856"/>
        <dbReference type="ChEBI" id="CHEBI:59789"/>
        <dbReference type="ChEBI" id="CHEBI:74269"/>
        <dbReference type="ChEBI" id="CHEBI:74480"/>
        <dbReference type="EC" id="2.1.1.33"/>
    </reaction>
</comment>
<comment type="pathway">
    <text evidence="2">tRNA modification; N(7)-methylguanine-tRNA biosynthesis.</text>
</comment>
<comment type="similarity">
    <text evidence="2">Belongs to the class I-like SAM-binding methyltransferase superfamily. TrmB family.</text>
</comment>
<protein>
    <recommendedName>
        <fullName evidence="2">tRNA (guanine-N(7)-)-methyltransferase</fullName>
        <ecNumber evidence="2">2.1.1.33</ecNumber>
    </recommendedName>
    <alternativeName>
        <fullName evidence="2">tRNA (guanine(46)-N(7))-methyltransferase</fullName>
    </alternativeName>
    <alternativeName>
        <fullName evidence="2">tRNA(m7G46)-methyltransferase</fullName>
    </alternativeName>
</protein>
<sequence length="250" mass="28068">MTNDSARMRKVLTFTRRSNRMTACQKRDYQHLASRWIIPYQNTVFDYAAVFCSPAAPSAPAGAFPAPQGKTDAVAPACAPAPLVVEIGFGMGSATAAIAARNPHLSYLGIEVYRAGIGRLLRKIEAERLHNLRIIEHDALDVLRTMIAPQTLAGLHIFFPDPWPKTRHHKRRLLYRPRTDLLARALAPGGYLYAVTDWAEYARRAQEELARTPSLTWAPQGARPWRPATEFERKAQTQGRAIHELFFIKA</sequence>
<proteinExistence type="inferred from homology"/>
<accession>B2S360</accession>
<feature type="chain" id="PRO_1000136373" description="tRNA (guanine-N(7)-)-methyltransferase">
    <location>
        <begin position="1"/>
        <end position="250"/>
    </location>
</feature>
<feature type="active site" evidence="1">
    <location>
        <position position="161"/>
    </location>
</feature>
<feature type="binding site" evidence="2">
    <location>
        <position position="86"/>
    </location>
    <ligand>
        <name>S-adenosyl-L-methionine</name>
        <dbReference type="ChEBI" id="CHEBI:59789"/>
    </ligand>
</feature>
<feature type="binding site" evidence="2">
    <location>
        <position position="111"/>
    </location>
    <ligand>
        <name>S-adenosyl-L-methionine</name>
        <dbReference type="ChEBI" id="CHEBI:59789"/>
    </ligand>
</feature>
<feature type="binding site" evidence="2">
    <location>
        <position position="138"/>
    </location>
    <ligand>
        <name>S-adenosyl-L-methionine</name>
        <dbReference type="ChEBI" id="CHEBI:59789"/>
    </ligand>
</feature>
<feature type="binding site" evidence="2">
    <location>
        <position position="161"/>
    </location>
    <ligand>
        <name>S-adenosyl-L-methionine</name>
        <dbReference type="ChEBI" id="CHEBI:59789"/>
    </ligand>
</feature>
<feature type="binding site" evidence="2">
    <location>
        <position position="165"/>
    </location>
    <ligand>
        <name>substrate</name>
    </ligand>
</feature>
<feature type="binding site" evidence="2">
    <location>
        <position position="197"/>
    </location>
    <ligand>
        <name>substrate</name>
    </ligand>
</feature>
<feature type="binding site" evidence="2">
    <location>
        <begin position="229"/>
        <end position="232"/>
    </location>
    <ligand>
        <name>substrate</name>
    </ligand>
</feature>
<dbReference type="EC" id="2.1.1.33" evidence="2"/>
<dbReference type="EMBL" id="CP000805">
    <property type="protein sequence ID" value="ACD70889.1"/>
    <property type="molecule type" value="Genomic_DNA"/>
</dbReference>
<dbReference type="RefSeq" id="WP_010881913.1">
    <property type="nucleotide sequence ID" value="NC_021508.1"/>
</dbReference>
<dbReference type="SMR" id="B2S360"/>
<dbReference type="GeneID" id="93876233"/>
<dbReference type="KEGG" id="tpp:TPASS_0464"/>
<dbReference type="PATRIC" id="fig|455434.6.peg.465"/>
<dbReference type="UniPathway" id="UPA00989"/>
<dbReference type="Proteomes" id="UP000001202">
    <property type="component" value="Chromosome"/>
</dbReference>
<dbReference type="GO" id="GO:0043527">
    <property type="term" value="C:tRNA methyltransferase complex"/>
    <property type="evidence" value="ECO:0007669"/>
    <property type="project" value="TreeGrafter"/>
</dbReference>
<dbReference type="GO" id="GO:0008176">
    <property type="term" value="F:tRNA (guanine(46)-N7)-methyltransferase activity"/>
    <property type="evidence" value="ECO:0007669"/>
    <property type="project" value="UniProtKB-UniRule"/>
</dbReference>
<dbReference type="CDD" id="cd02440">
    <property type="entry name" value="AdoMet_MTases"/>
    <property type="match status" value="1"/>
</dbReference>
<dbReference type="Gene3D" id="3.40.50.150">
    <property type="entry name" value="Vaccinia Virus protein VP39"/>
    <property type="match status" value="1"/>
</dbReference>
<dbReference type="HAMAP" id="MF_01057">
    <property type="entry name" value="tRNA_methyltr_TrmB"/>
    <property type="match status" value="1"/>
</dbReference>
<dbReference type="InterPro" id="IPR029063">
    <property type="entry name" value="SAM-dependent_MTases_sf"/>
</dbReference>
<dbReference type="InterPro" id="IPR003358">
    <property type="entry name" value="tRNA_(Gua-N-7)_MeTrfase_Trmb"/>
</dbReference>
<dbReference type="InterPro" id="IPR055361">
    <property type="entry name" value="tRNA_methyltr_TrmB_bact"/>
</dbReference>
<dbReference type="NCBIfam" id="TIGR00091">
    <property type="entry name" value="tRNA (guanosine(46)-N7)-methyltransferase TrmB"/>
    <property type="match status" value="1"/>
</dbReference>
<dbReference type="PANTHER" id="PTHR23417">
    <property type="entry name" value="3-DEOXY-D-MANNO-OCTULOSONIC-ACID TRANSFERASE/TRNA GUANINE-N 7 - -METHYLTRANSFERASE"/>
    <property type="match status" value="1"/>
</dbReference>
<dbReference type="PANTHER" id="PTHR23417:SF14">
    <property type="entry name" value="PENTACOTRIPEPTIDE-REPEAT REGION OF PRORP DOMAIN-CONTAINING PROTEIN"/>
    <property type="match status" value="1"/>
</dbReference>
<dbReference type="Pfam" id="PF02390">
    <property type="entry name" value="Methyltransf_4"/>
    <property type="match status" value="1"/>
</dbReference>
<dbReference type="SUPFAM" id="SSF53335">
    <property type="entry name" value="S-adenosyl-L-methionine-dependent methyltransferases"/>
    <property type="match status" value="1"/>
</dbReference>
<dbReference type="PROSITE" id="PS51625">
    <property type="entry name" value="SAM_MT_TRMB"/>
    <property type="match status" value="1"/>
</dbReference>
<evidence type="ECO:0000250" key="1"/>
<evidence type="ECO:0000255" key="2">
    <source>
        <dbReference type="HAMAP-Rule" id="MF_01057"/>
    </source>
</evidence>
<name>TRMB_TREPS</name>
<keyword id="KW-0489">Methyltransferase</keyword>
<keyword id="KW-0949">S-adenosyl-L-methionine</keyword>
<keyword id="KW-0808">Transferase</keyword>
<keyword id="KW-0819">tRNA processing</keyword>
<reference key="1">
    <citation type="journal article" date="2008" name="BMC Microbiol.">
        <title>Complete genome sequence of Treponema pallidum ssp. pallidum strain SS14 determined with oligonucleotide arrays.</title>
        <authorList>
            <person name="Matejkova P."/>
            <person name="Strouhal M."/>
            <person name="Smajs D."/>
            <person name="Norris S.J."/>
            <person name="Palzkill T."/>
            <person name="Petrosino J.F."/>
            <person name="Sodergren E."/>
            <person name="Norton J.E."/>
            <person name="Singh J."/>
            <person name="Richmond T.A."/>
            <person name="Molla M.N."/>
            <person name="Albert T.J."/>
            <person name="Weinstock G.M."/>
        </authorList>
    </citation>
    <scope>NUCLEOTIDE SEQUENCE [LARGE SCALE GENOMIC DNA]</scope>
    <source>
        <strain>SS14</strain>
    </source>
</reference>